<keyword id="KW-0539">Nucleus</keyword>
<keyword id="KW-1185">Reference proteome</keyword>
<dbReference type="EMBL" id="AB222129">
    <property type="protein sequence ID" value="BAF62374.1"/>
    <property type="molecule type" value="mRNA"/>
</dbReference>
<dbReference type="RefSeq" id="NP_001104285.1">
    <property type="nucleotide sequence ID" value="NM_001110815.1"/>
</dbReference>
<dbReference type="FunCoup" id="A5A6K1">
    <property type="interactions" value="519"/>
</dbReference>
<dbReference type="STRING" id="9598.ENSPTRP00000077479"/>
<dbReference type="PaxDb" id="9598-ENSPTRP00000058086"/>
<dbReference type="GeneID" id="467787"/>
<dbReference type="KEGG" id="ptr:467787"/>
<dbReference type="CTD" id="8926"/>
<dbReference type="eggNOG" id="ENOG502T5G1">
    <property type="taxonomic scope" value="Eukaryota"/>
</dbReference>
<dbReference type="HOGENOM" id="CLU_165583_0_0_1"/>
<dbReference type="InParanoid" id="A5A6K1"/>
<dbReference type="TreeFam" id="TF338383"/>
<dbReference type="Proteomes" id="UP000002277">
    <property type="component" value="Unplaced"/>
</dbReference>
<dbReference type="GO" id="GO:0016607">
    <property type="term" value="C:nuclear speck"/>
    <property type="evidence" value="ECO:0000318"/>
    <property type="project" value="GO_Central"/>
</dbReference>
<dbReference type="InterPro" id="IPR009847">
    <property type="entry name" value="SNURF"/>
</dbReference>
<dbReference type="PANTHER" id="PTHR14508">
    <property type="entry name" value="SNRPN UPSTREAM READING FRAME PROTEIN, SNURF"/>
    <property type="match status" value="1"/>
</dbReference>
<dbReference type="PANTHER" id="PTHR14508:SF2">
    <property type="entry name" value="SNRPN UPSTREAM READING FRAME PROTEIN-RELATED"/>
    <property type="match status" value="1"/>
</dbReference>
<dbReference type="Pfam" id="PF07192">
    <property type="entry name" value="SNURF"/>
    <property type="match status" value="1"/>
</dbReference>
<proteinExistence type="inferred from homology"/>
<feature type="chain" id="PRO_0000312995" description="SNRPN upstream reading frame protein">
    <location>
        <begin position="1"/>
        <end position="71"/>
    </location>
</feature>
<sequence length="71" mass="8412">MERARDRLHLRRTTEQHVPEVEVQVKRRRTASLSNQECQLYPRRSQQQQVPVVDFQAELRQAFLAETPRGG</sequence>
<protein>
    <recommendedName>
        <fullName>SNRPN upstream reading frame protein</fullName>
    </recommendedName>
</protein>
<name>SNURF_PANTR</name>
<comment type="subcellular location">
    <subcellularLocation>
        <location evidence="1">Nucleus</location>
    </subcellularLocation>
</comment>
<comment type="miscellaneous">
    <text>Encoded on a bicistronic transcript that code for two proteins, SNRPN and SNURF.</text>
</comment>
<comment type="similarity">
    <text evidence="2">Belongs to the SNURF family.</text>
</comment>
<gene>
    <name type="primary">SNURF</name>
</gene>
<organism>
    <name type="scientific">Pan troglodytes</name>
    <name type="common">Chimpanzee</name>
    <dbReference type="NCBI Taxonomy" id="9598"/>
    <lineage>
        <taxon>Eukaryota</taxon>
        <taxon>Metazoa</taxon>
        <taxon>Chordata</taxon>
        <taxon>Craniata</taxon>
        <taxon>Vertebrata</taxon>
        <taxon>Euteleostomi</taxon>
        <taxon>Mammalia</taxon>
        <taxon>Eutheria</taxon>
        <taxon>Euarchontoglires</taxon>
        <taxon>Primates</taxon>
        <taxon>Haplorrhini</taxon>
        <taxon>Catarrhini</taxon>
        <taxon>Hominidae</taxon>
        <taxon>Pan</taxon>
    </lineage>
</organism>
<evidence type="ECO:0000250" key="1"/>
<evidence type="ECO:0000305" key="2"/>
<accession>A5A6K1</accession>
<reference key="1">
    <citation type="journal article" date="2007" name="Gene">
        <title>Mapping of chimpanzee full-length cDNAs onto the human genome unveils large potential divergence of the transcriptome.</title>
        <authorList>
            <person name="Sakate R."/>
            <person name="Suto Y."/>
            <person name="Imanishi T."/>
            <person name="Tanoue T."/>
            <person name="Hida M."/>
            <person name="Hayasaka I."/>
            <person name="Kusuda J."/>
            <person name="Gojobori T."/>
            <person name="Hashimoto K."/>
            <person name="Hirai M."/>
        </authorList>
    </citation>
    <scope>NUCLEOTIDE SEQUENCE [MRNA]</scope>
    <source>
        <tissue>Brain</tissue>
    </source>
</reference>